<comment type="function">
    <text evidence="3">Triacylglycerol hydrolase that shows hydrolysis preference towards some of the natural oils such as olive, sunflower and corn oils.</text>
</comment>
<comment type="catalytic activity">
    <reaction evidence="3">
        <text>a triacylglycerol + H2O = a diacylglycerol + a fatty acid + H(+)</text>
        <dbReference type="Rhea" id="RHEA:12044"/>
        <dbReference type="ChEBI" id="CHEBI:15377"/>
        <dbReference type="ChEBI" id="CHEBI:15378"/>
        <dbReference type="ChEBI" id="CHEBI:17855"/>
        <dbReference type="ChEBI" id="CHEBI:18035"/>
        <dbReference type="ChEBI" id="CHEBI:28868"/>
        <dbReference type="EC" id="3.1.1.3"/>
    </reaction>
</comment>
<comment type="activity regulation">
    <text evidence="3">Activity is inhibited by zinc and iron ions, and activated in vitro in 25% v/v DMSO and acetone.</text>
</comment>
<comment type="biophysicochemical properties">
    <phDependence>
        <text evidence="3">Optimum pH is 8.0. Is stable in a broad pH range of 7-10.</text>
    </phDependence>
    <temperatureDependence>
        <text evidence="3">Optimum temperature is 70 degrees Celsius. Highly thermostable with a half-life of 315 minutes at 60 degrees Celsius, 125 minutes at 65 degrees Celsius and 45 minutes at 70 degrees Celsius.</text>
    </temperatureDependence>
</comment>
<comment type="subunit">
    <text evidence="4">Homodimer.</text>
</comment>
<comment type="subcellular location">
    <subcellularLocation>
        <location evidence="1">Secreted</location>
    </subcellularLocation>
</comment>
<comment type="miscellaneous">
    <text>Is stable in polar organic solvents such as DMSO, DMF, acetone, methanol, ethanol, heptanol and octanol, which could make it as a potential biocatalyst for the use in industrial biodiesel production.</text>
</comment>
<comment type="similarity">
    <text evidence="5">Belongs to the AB hydrolase superfamily.</text>
</comment>
<evidence type="ECO:0000250" key="1"/>
<evidence type="ECO:0000255" key="2"/>
<evidence type="ECO:0000269" key="3">
    <source ref="1"/>
</evidence>
<evidence type="ECO:0000269" key="4">
    <source ref="3"/>
</evidence>
<evidence type="ECO:0000305" key="5"/>
<evidence type="ECO:0007829" key="6">
    <source>
        <dbReference type="PDB" id="4FKB"/>
    </source>
</evidence>
<protein>
    <recommendedName>
        <fullName>Lipase</fullName>
        <ecNumber>3.1.1.3</ecNumber>
    </recommendedName>
    <alternativeName>
        <fullName>Lip 42</fullName>
    </alternativeName>
    <alternativeName>
        <fullName>Thermostable organic solvent tolerant lipase</fullName>
    </alternativeName>
    <alternativeName>
        <fullName>Triacylglycerol hydrolase</fullName>
    </alternativeName>
</protein>
<dbReference type="EC" id="3.1.1.3"/>
<dbReference type="EMBL" id="AY787835">
    <property type="protein sequence ID" value="AAV35102.2"/>
    <property type="molecule type" value="Genomic_DNA"/>
</dbReference>
<dbReference type="PDB" id="4FKB">
    <property type="method" value="X-ray"/>
    <property type="resolution" value="1.22 A"/>
    <property type="chains" value="A/B=29-416"/>
</dbReference>
<dbReference type="PDBsum" id="4FKB"/>
<dbReference type="SMR" id="Q5U780"/>
<dbReference type="ESTHER" id="bacsp-lip">
    <property type="family name" value="Bacterial_lip_FamI.5"/>
</dbReference>
<dbReference type="EvolutionaryTrace" id="Q5U780"/>
<dbReference type="GO" id="GO:0005576">
    <property type="term" value="C:extracellular region"/>
    <property type="evidence" value="ECO:0007669"/>
    <property type="project" value="UniProtKB-SubCell"/>
</dbReference>
<dbReference type="GO" id="GO:0046872">
    <property type="term" value="F:metal ion binding"/>
    <property type="evidence" value="ECO:0007669"/>
    <property type="project" value="UniProtKB-KW"/>
</dbReference>
<dbReference type="GO" id="GO:0004806">
    <property type="term" value="F:triacylglycerol lipase activity"/>
    <property type="evidence" value="ECO:0007669"/>
    <property type="project" value="UniProtKB-EC"/>
</dbReference>
<dbReference type="GO" id="GO:0016042">
    <property type="term" value="P:lipid catabolic process"/>
    <property type="evidence" value="ECO:0007669"/>
    <property type="project" value="UniProtKB-KW"/>
</dbReference>
<dbReference type="Gene3D" id="3.40.50.1820">
    <property type="entry name" value="alpha/beta hydrolase"/>
    <property type="match status" value="1"/>
</dbReference>
<dbReference type="InterPro" id="IPR029058">
    <property type="entry name" value="AB_hydrolase_fold"/>
</dbReference>
<dbReference type="InterPro" id="IPR056304">
    <property type="entry name" value="Lip-like_C"/>
</dbReference>
<dbReference type="PANTHER" id="PTHR34043">
    <property type="entry name" value="ALPHA/BETA-HYDROLASES SUPERFAMILY PROTEIN"/>
    <property type="match status" value="1"/>
</dbReference>
<dbReference type="PANTHER" id="PTHR34043:SF3">
    <property type="entry name" value="ALPHA_BETA-HYDROLASES SUPERFAMILY PROTEIN"/>
    <property type="match status" value="1"/>
</dbReference>
<dbReference type="Pfam" id="PF24708">
    <property type="entry name" value="Lip_C"/>
    <property type="match status" value="1"/>
</dbReference>
<dbReference type="SUPFAM" id="SSF53474">
    <property type="entry name" value="alpha/beta-Hydrolases"/>
    <property type="match status" value="1"/>
</dbReference>
<keyword id="KW-0002">3D-structure</keyword>
<keyword id="KW-0106">Calcium</keyword>
<keyword id="KW-0378">Hydrolase</keyword>
<keyword id="KW-0442">Lipid degradation</keyword>
<keyword id="KW-0443">Lipid metabolism</keyword>
<keyword id="KW-0479">Metal-binding</keyword>
<keyword id="KW-0964">Secreted</keyword>
<keyword id="KW-0732">Signal</keyword>
<sequence>MKCCRIMFVLLGLWFVFGLSVPGGRTEAASLRANDAPIVLLHGFTGWGREEMFGFKYWGGVRGDIEQWLNDNGYRTYTLAVGPLSSNWDRACEAYAQLVGGTVDYGAAHAAKHGHARFGRTYPGLLPELKRGGRIHIIAHSQGGQTARMLVSLLENGSQEEREYAKAHNVSLSPLFEGGHHFVLSVTTIATPHDGTTLVNMVDFTDRFFDLQKAVLEAAAVASNVPYTSQVYDFKLDQWGLRRQPGESFDHYFERLKRSPVWTSTDTARYDLSVSGAEKLNQWVQASPNTYYLSFSTERTYRGALTGNHYPELGMNAFSAVVCAPFLGSYRNPTLGIDDRWLENDGIVNTVSMNGPKRGSSDRIVPYDGTLKKGVWNDMGTYNVDHLEIIGVDPNPSFDIRAFYLRLAEQLASLRP</sequence>
<accession>Q5U780</accession>
<name>LIP_BACSP</name>
<reference key="1">
    <citation type="journal article" date="2009" name="Ann. Microbiol.">
        <title>Characterization and solvent stable features of Strep-tagged purified recombinant lipase from thermostable and solvent tolerant Bacillus sp. strain 42.</title>
        <authorList>
            <person name="Hamid T.H.T.A."/>
            <person name="Eltaweel M.A."/>
            <person name="Rahman R.N.Z.R.A."/>
            <person name="Basri M."/>
            <person name="Salleh A.B."/>
        </authorList>
    </citation>
    <scope>NUCLEOTIDE SEQUENCE [GENOMIC DNA]</scope>
    <scope>FUNCTION</scope>
    <scope>CATALYTIC ACTIVITY</scope>
    <scope>SUBSTRATE SPECIFICITY</scope>
    <scope>BIOPHYSICOCHEMICAL PROPERTIES</scope>
    <scope>SOLVENT STABILITY</scope>
    <scope>ACTIVITY REGULATION</scope>
    <source>
        <strain>42</strain>
    </source>
</reference>
<reference key="2">
    <citation type="submission" date="2012-11" db="EMBL/GenBank/DDBJ databases">
        <authorList>
            <person name="Khusaini M.S."/>
            <person name="Rahman R.N.Z.R.A."/>
        </authorList>
    </citation>
    <scope>SEQUENCE REVISION TO 175</scope>
</reference>
<reference key="3">
    <citation type="submission" date="2012-06" db="PDB data bank">
        <title>An Organic solvent tolerant lipase 42.</title>
        <authorList>
            <person name="Zaliha R.N."/>
            <person name="Rahman R.A."/>
            <person name="Khusaini M.S."/>
        </authorList>
    </citation>
    <scope>X-RAY CRYSTALLOGRAPHY (1.22 ANGSTROMS) OF 29-416 IN COMPLEX WITH CALCIUM</scope>
    <scope>SUBUNIT</scope>
    <scope>ACTIVE SITES</scope>
    <source>
        <strain>42</strain>
    </source>
</reference>
<feature type="signal peptide" evidence="2">
    <location>
        <begin position="1"/>
        <end position="28"/>
    </location>
</feature>
<feature type="chain" id="PRO_0000419954" description="Lipase">
    <location>
        <begin position="29"/>
        <end position="416"/>
    </location>
</feature>
<feature type="active site" description="Nucleophile" evidence="4">
    <location>
        <position position="141"/>
    </location>
</feature>
<feature type="active site" description="Charge relay system" evidence="4">
    <location>
        <position position="345"/>
    </location>
</feature>
<feature type="active site" description="Charge relay system" evidence="4">
    <location>
        <position position="386"/>
    </location>
</feature>
<feature type="binding site" evidence="4">
    <location>
        <position position="314"/>
    </location>
    <ligand>
        <name>Ca(2+)</name>
        <dbReference type="ChEBI" id="CHEBI:29108"/>
    </ligand>
</feature>
<feature type="binding site" evidence="1">
    <location>
        <position position="385"/>
    </location>
    <ligand>
        <name>Ca(2+)</name>
        <dbReference type="ChEBI" id="CHEBI:29108"/>
    </ligand>
</feature>
<feature type="binding site" evidence="4">
    <location>
        <position position="388"/>
    </location>
    <ligand>
        <name>Ca(2+)</name>
        <dbReference type="ChEBI" id="CHEBI:29108"/>
    </ligand>
</feature>
<feature type="binding site" evidence="4">
    <location>
        <position position="393"/>
    </location>
    <ligand>
        <name>Ca(2+)</name>
        <dbReference type="ChEBI" id="CHEBI:29108"/>
    </ligand>
</feature>
<feature type="binding site" evidence="4">
    <location>
        <position position="394"/>
    </location>
    <ligand>
        <name>Ca(2+)</name>
        <dbReference type="ChEBI" id="CHEBI:29108"/>
    </ligand>
</feature>
<feature type="strand" evidence="6">
    <location>
        <begin position="38"/>
        <end position="41"/>
    </location>
</feature>
<feature type="helix" evidence="6">
    <location>
        <begin position="52"/>
        <end position="54"/>
    </location>
</feature>
<feature type="turn" evidence="6">
    <location>
        <begin position="57"/>
        <end position="59"/>
    </location>
</feature>
<feature type="helix" evidence="6">
    <location>
        <begin position="60"/>
        <end position="62"/>
    </location>
</feature>
<feature type="helix" evidence="6">
    <location>
        <begin position="65"/>
        <end position="71"/>
    </location>
</feature>
<feature type="strand" evidence="6">
    <location>
        <begin position="76"/>
        <end position="78"/>
    </location>
</feature>
<feature type="strand" evidence="6">
    <location>
        <begin position="83"/>
        <end position="85"/>
    </location>
</feature>
<feature type="helix" evidence="6">
    <location>
        <begin position="87"/>
        <end position="99"/>
    </location>
</feature>
<feature type="strand" evidence="6">
    <location>
        <begin position="101"/>
        <end position="104"/>
    </location>
</feature>
<feature type="helix" evidence="6">
    <location>
        <begin position="107"/>
        <end position="113"/>
    </location>
</feature>
<feature type="strand" evidence="6">
    <location>
        <begin position="117"/>
        <end position="122"/>
    </location>
</feature>
<feature type="helix" evidence="6">
    <location>
        <begin position="127"/>
        <end position="130"/>
    </location>
</feature>
<feature type="strand" evidence="6">
    <location>
        <begin position="135"/>
        <end position="140"/>
    </location>
</feature>
<feature type="helix" evidence="6">
    <location>
        <begin position="143"/>
        <end position="156"/>
    </location>
</feature>
<feature type="helix" evidence="6">
    <location>
        <begin position="159"/>
        <end position="168"/>
    </location>
</feature>
<feature type="helix" evidence="6">
    <location>
        <begin position="174"/>
        <end position="176"/>
    </location>
</feature>
<feature type="strand" evidence="6">
    <location>
        <begin position="183"/>
        <end position="190"/>
    </location>
</feature>
<feature type="helix" evidence="6">
    <location>
        <begin position="197"/>
        <end position="200"/>
    </location>
</feature>
<feature type="helix" evidence="6">
    <location>
        <begin position="204"/>
        <end position="218"/>
    </location>
</feature>
<feature type="strand" evidence="6">
    <location>
        <begin position="223"/>
        <end position="225"/>
    </location>
</feature>
<feature type="helix" evidence="6">
    <location>
        <begin position="237"/>
        <end position="239"/>
    </location>
</feature>
<feature type="helix" evidence="6">
    <location>
        <begin position="249"/>
        <end position="257"/>
    </location>
</feature>
<feature type="helix" evidence="6">
    <location>
        <begin position="260"/>
        <end position="263"/>
    </location>
</feature>
<feature type="strand" evidence="6">
    <location>
        <begin position="264"/>
        <end position="267"/>
    </location>
</feature>
<feature type="helix" evidence="6">
    <location>
        <begin position="268"/>
        <end position="272"/>
    </location>
</feature>
<feature type="helix" evidence="6">
    <location>
        <begin position="274"/>
        <end position="283"/>
    </location>
</feature>
<feature type="strand" evidence="6">
    <location>
        <begin position="290"/>
        <end position="297"/>
    </location>
</feature>
<feature type="strand" evidence="6">
    <location>
        <begin position="300"/>
        <end position="302"/>
    </location>
</feature>
<feature type="strand" evidence="6">
    <location>
        <begin position="304"/>
        <end position="307"/>
    </location>
</feature>
<feature type="strand" evidence="6">
    <location>
        <begin position="309"/>
        <end position="311"/>
    </location>
</feature>
<feature type="helix" evidence="6">
    <location>
        <begin position="317"/>
        <end position="322"/>
    </location>
</feature>
<feature type="helix" evidence="6">
    <location>
        <begin position="324"/>
        <end position="327"/>
    </location>
</feature>
<feature type="helix" evidence="6">
    <location>
        <begin position="333"/>
        <end position="335"/>
    </location>
</feature>
<feature type="helix" evidence="6">
    <location>
        <begin position="339"/>
        <end position="341"/>
    </location>
</feature>
<feature type="strand" evidence="6">
    <location>
        <begin position="344"/>
        <end position="349"/>
    </location>
</feature>
<feature type="helix" evidence="6">
    <location>
        <begin position="350"/>
        <end position="353"/>
    </location>
</feature>
<feature type="strand" evidence="6">
    <location>
        <begin position="364"/>
        <end position="366"/>
    </location>
</feature>
<feature type="strand" evidence="6">
    <location>
        <begin position="375"/>
        <end position="383"/>
    </location>
</feature>
<feature type="turn" evidence="6">
    <location>
        <begin position="386"/>
        <end position="391"/>
    </location>
</feature>
<feature type="helix" evidence="6">
    <location>
        <begin position="400"/>
        <end position="412"/>
    </location>
</feature>
<proteinExistence type="evidence at protein level"/>
<organism>
    <name type="scientific">Bacillus sp</name>
    <dbReference type="NCBI Taxonomy" id="1409"/>
    <lineage>
        <taxon>Bacteria</taxon>
        <taxon>Bacillati</taxon>
        <taxon>Bacillota</taxon>
        <taxon>Bacilli</taxon>
        <taxon>Bacillales</taxon>
        <taxon>Bacillaceae</taxon>
        <taxon>Bacillus</taxon>
    </lineage>
</organism>